<comment type="function">
    <text evidence="4 5">Hydrolyzes the ester bond of the acyl group attached at the sn-1 position of phosphatidylserines (phospholipase A1 activity) and 1-acyl-2-lysophosphatidylserines (lysophospholipase activity) in the pathway of phosphatidylserines acyl chain remodeling (PubMed:8999922). Cleaves phosphatidylserines exposed on the outer leaflet of the plasma membrane of apoptotic cells producing 2-acyl-1-lysophosphatidylserines, which in turn enhance mast cell activation and histamine production (PubMed:11395520). Has no activity toward other glycerophospholipids including phosphatidylcholines, phosphatidylethanolamines, phosphatidic acids or phosphatidylinositols, or glycerolipids such as triolein (PubMed:8999922).</text>
</comment>
<comment type="catalytic activity">
    <reaction evidence="5">
        <text>a 1,2-diacyl-sn-glycero-3-phospho-L-serine + H2O = a 2-acyl-sn-glycero-3-phospho-L-serine + a fatty acid + H(+)</text>
        <dbReference type="Rhea" id="RHEA:42212"/>
        <dbReference type="ChEBI" id="CHEBI:15377"/>
        <dbReference type="ChEBI" id="CHEBI:15378"/>
        <dbReference type="ChEBI" id="CHEBI:28868"/>
        <dbReference type="ChEBI" id="CHEBI:57262"/>
        <dbReference type="ChEBI" id="CHEBI:65214"/>
        <dbReference type="EC" id="3.1.1.111"/>
    </reaction>
    <physiologicalReaction direction="left-to-right" evidence="7">
        <dbReference type="Rhea" id="RHEA:42213"/>
    </physiologicalReaction>
</comment>
<comment type="catalytic activity">
    <reaction evidence="5">
        <text>1,2-di-(9Z)-octadecenoyl-sn-glycero-3-phospho-L-serine + H2O = 2-(9Z-octadecenoyl)-sn-glycero-3-phospho-L-serine + (9Z)-octadecenoate + H(+)</text>
        <dbReference type="Rhea" id="RHEA:40491"/>
        <dbReference type="ChEBI" id="CHEBI:15377"/>
        <dbReference type="ChEBI" id="CHEBI:15378"/>
        <dbReference type="ChEBI" id="CHEBI:30823"/>
        <dbReference type="ChEBI" id="CHEBI:74905"/>
        <dbReference type="ChEBI" id="CHEBI:77342"/>
    </reaction>
    <physiologicalReaction direction="left-to-right" evidence="7">
        <dbReference type="Rhea" id="RHEA:40492"/>
    </physiologicalReaction>
</comment>
<comment type="catalytic activity">
    <reaction evidence="5">
        <text>1-hexadecanoyl-2-(5Z,8Z,11Z,14Z-eicosatetraenoyl)-sn-glycero-3-phospho-L-serine + H2O = 2-(5Z,8Z,11Z,14Z)-eicosatetraenoyl-sn-glycero-3-phospho-L-serine + hexadecanoate + H(+)</text>
        <dbReference type="Rhea" id="RHEA:41187"/>
        <dbReference type="ChEBI" id="CHEBI:7896"/>
        <dbReference type="ChEBI" id="CHEBI:15377"/>
        <dbReference type="ChEBI" id="CHEBI:15378"/>
        <dbReference type="ChEBI" id="CHEBI:75032"/>
        <dbReference type="ChEBI" id="CHEBI:77830"/>
    </reaction>
    <physiologicalReaction direction="left-to-right" evidence="7">
        <dbReference type="Rhea" id="RHEA:41188"/>
    </physiologicalReaction>
</comment>
<comment type="catalytic activity">
    <reaction evidence="5">
        <text>a 1-acyl-sn-glycero-3-phospho-L-serine + H2O = sn-glycero-3-phospho-L-serine + a fatty acid + H(+)</text>
        <dbReference type="Rhea" id="RHEA:32979"/>
        <dbReference type="ChEBI" id="CHEBI:15377"/>
        <dbReference type="ChEBI" id="CHEBI:15378"/>
        <dbReference type="ChEBI" id="CHEBI:28868"/>
        <dbReference type="ChEBI" id="CHEBI:64379"/>
        <dbReference type="ChEBI" id="CHEBI:64765"/>
        <dbReference type="EC" id="3.1.1.111"/>
    </reaction>
    <physiologicalReaction direction="left-to-right" evidence="7">
        <dbReference type="Rhea" id="RHEA:32980"/>
    </physiologicalReaction>
</comment>
<comment type="catalytic activity">
    <reaction evidence="5">
        <text>1-(9Z-octadecenoyl)-sn-glycero-3-phospho-L-serine + H2O = sn-glycero-3-phospho-L-serine + (9Z)-octadecenoate + H(+)</text>
        <dbReference type="Rhea" id="RHEA:40499"/>
        <dbReference type="ChEBI" id="CHEBI:15377"/>
        <dbReference type="ChEBI" id="CHEBI:15378"/>
        <dbReference type="ChEBI" id="CHEBI:30823"/>
        <dbReference type="ChEBI" id="CHEBI:64765"/>
        <dbReference type="ChEBI" id="CHEBI:74617"/>
    </reaction>
    <physiologicalReaction direction="left-to-right" evidence="7">
        <dbReference type="Rhea" id="RHEA:40500"/>
    </physiologicalReaction>
</comment>
<comment type="subcellular location">
    <subcellularLocation>
        <location evidence="5">Secreted</location>
    </subcellularLocation>
</comment>
<comment type="similarity">
    <text evidence="6">Belongs to the AB hydrolase superfamily. Lipase family.</text>
</comment>
<dbReference type="EC" id="3.1.1.111" evidence="5"/>
<dbReference type="EMBL" id="D88666">
    <property type="protein sequence ID" value="BAA13672.1"/>
    <property type="molecule type" value="mRNA"/>
</dbReference>
<dbReference type="EMBL" id="BC078727">
    <property type="protein sequence ID" value="AAH78727.1"/>
    <property type="molecule type" value="mRNA"/>
</dbReference>
<dbReference type="RefSeq" id="NP_620237.1">
    <property type="nucleotide sequence ID" value="NM_138882.2"/>
</dbReference>
<dbReference type="SMR" id="P97535"/>
<dbReference type="FunCoup" id="P97535">
    <property type="interactions" value="293"/>
</dbReference>
<dbReference type="STRING" id="10116.ENSRNOP00000071860"/>
<dbReference type="BindingDB" id="P97535"/>
<dbReference type="ChEMBL" id="CHEMBL2307"/>
<dbReference type="SwissLipids" id="SLP:000000649"/>
<dbReference type="ESTHER" id="ratno-P97535">
    <property type="family name" value="Phospholipase"/>
</dbReference>
<dbReference type="GlyCosmos" id="P97535">
    <property type="glycosylation" value="1 site, No reported glycans"/>
</dbReference>
<dbReference type="GlyGen" id="P97535">
    <property type="glycosylation" value="1 site"/>
</dbReference>
<dbReference type="PhosphoSitePlus" id="P97535"/>
<dbReference type="PaxDb" id="10116-ENSRNOP00000035788"/>
<dbReference type="Ensembl" id="ENSRNOT00000077727.2">
    <property type="protein sequence ID" value="ENSRNOP00000071860.1"/>
    <property type="gene ID" value="ENSRNOG00000057153.2"/>
</dbReference>
<dbReference type="GeneID" id="85311"/>
<dbReference type="KEGG" id="rno:85311"/>
<dbReference type="UCSC" id="RGD:621261">
    <property type="organism name" value="rat"/>
</dbReference>
<dbReference type="AGR" id="RGD:621261"/>
<dbReference type="CTD" id="51365"/>
<dbReference type="RGD" id="621261">
    <property type="gene designation" value="Pla1a"/>
</dbReference>
<dbReference type="eggNOG" id="ENOG502QQQP">
    <property type="taxonomic scope" value="Eukaryota"/>
</dbReference>
<dbReference type="GeneTree" id="ENSGT00940000159279"/>
<dbReference type="HOGENOM" id="CLU_027171_3_1_1"/>
<dbReference type="InParanoid" id="P97535"/>
<dbReference type="OMA" id="AHANPQC"/>
<dbReference type="OrthoDB" id="199913at2759"/>
<dbReference type="PhylomeDB" id="P97535"/>
<dbReference type="TreeFam" id="TF324997"/>
<dbReference type="BRENDA" id="3.1.1.111">
    <property type="organism ID" value="5301"/>
</dbReference>
<dbReference type="Reactome" id="R-RNO-1482801">
    <property type="pathway name" value="Acyl chain remodelling of PS"/>
</dbReference>
<dbReference type="PRO" id="PR:P97535"/>
<dbReference type="Proteomes" id="UP000002494">
    <property type="component" value="Chromosome 11"/>
</dbReference>
<dbReference type="Bgee" id="ENSRNOG00000057153">
    <property type="expression patterns" value="Expressed in stomach and 18 other cell types or tissues"/>
</dbReference>
<dbReference type="GO" id="GO:0002080">
    <property type="term" value="C:acrosomal membrane"/>
    <property type="evidence" value="ECO:0000266"/>
    <property type="project" value="RGD"/>
</dbReference>
<dbReference type="GO" id="GO:0005615">
    <property type="term" value="C:extracellular space"/>
    <property type="evidence" value="ECO:0000318"/>
    <property type="project" value="GO_Central"/>
</dbReference>
<dbReference type="GO" id="GO:0008970">
    <property type="term" value="F:phospholipase A1 activity"/>
    <property type="evidence" value="ECO:0000266"/>
    <property type="project" value="RGD"/>
</dbReference>
<dbReference type="GO" id="GO:0016042">
    <property type="term" value="P:lipid catabolic process"/>
    <property type="evidence" value="ECO:0000318"/>
    <property type="project" value="GO_Central"/>
</dbReference>
<dbReference type="CDD" id="cd00707">
    <property type="entry name" value="Pancreat_lipase_like"/>
    <property type="match status" value="1"/>
</dbReference>
<dbReference type="FunFam" id="3.40.50.1820:FF:000081">
    <property type="entry name" value="phospholipase A1 member A isoform X1"/>
    <property type="match status" value="1"/>
</dbReference>
<dbReference type="Gene3D" id="3.40.50.1820">
    <property type="entry name" value="alpha/beta hydrolase"/>
    <property type="match status" value="1"/>
</dbReference>
<dbReference type="InterPro" id="IPR029058">
    <property type="entry name" value="AB_hydrolase_fold"/>
</dbReference>
<dbReference type="InterPro" id="IPR013818">
    <property type="entry name" value="Lipase"/>
</dbReference>
<dbReference type="InterPro" id="IPR016272">
    <property type="entry name" value="Lipase_LIPH"/>
</dbReference>
<dbReference type="InterPro" id="IPR033906">
    <property type="entry name" value="Lipase_N"/>
</dbReference>
<dbReference type="InterPro" id="IPR000734">
    <property type="entry name" value="TAG_lipase"/>
</dbReference>
<dbReference type="PANTHER" id="PTHR11610">
    <property type="entry name" value="LIPASE"/>
    <property type="match status" value="1"/>
</dbReference>
<dbReference type="PANTHER" id="PTHR11610:SF111">
    <property type="entry name" value="PHOSPHOLIPASE A1 MEMBER A"/>
    <property type="match status" value="1"/>
</dbReference>
<dbReference type="Pfam" id="PF00151">
    <property type="entry name" value="Lipase"/>
    <property type="match status" value="1"/>
</dbReference>
<dbReference type="PIRSF" id="PIRSF000865">
    <property type="entry name" value="Lipoprotein_lipase_LIPH"/>
    <property type="match status" value="1"/>
</dbReference>
<dbReference type="PRINTS" id="PR00821">
    <property type="entry name" value="TAGLIPASE"/>
</dbReference>
<dbReference type="SUPFAM" id="SSF53474">
    <property type="entry name" value="alpha/beta-Hydrolases"/>
    <property type="match status" value="1"/>
</dbReference>
<dbReference type="PROSITE" id="PS00120">
    <property type="entry name" value="LIPASE_SER"/>
    <property type="match status" value="1"/>
</dbReference>
<sequence>MCPGLWGTCFWLWGSLLWLSIGRSGNVPPTTQPKCTDFQSANLLRGTNLKVQFLLFTPSDPGCGQLVEEDSDIRNSEFNASLGTKLIIHGFRALGTKPSWINKFIRALLRAADANVIAVDWVYGSTGMYFSAVENVVKLSLEISRFLSKLLELGVSESSIHIIGVSLGAHVGGMVGHFYKGQLGRITGLDPAGPEYTRASLEERLDSGDALFVEAIHTDTDNLGIRIPVGHVDYFVNGGQDQPGCPAFIHAGYSYLICDHMRAVHLYISALENTCPLMAFPCASYKAFLAGDCLDCFNPFLLSCPRIGLVERGGVKIEPLPKEVRVYLQTTSSAPYCVHHSLVEFNLKEKRKKDTSIEVTFLGNNVTSSVKITIPKDHLEGRGIIAHQNPHCQINQVKLKFHISSRVWRKDRTPIVGTFCTAPLPVNDSKKTVCIPEPVRLQVSMAVLRDLKMACV</sequence>
<feature type="signal peptide" evidence="5">
    <location>
        <begin position="1"/>
        <end position="24"/>
    </location>
</feature>
<feature type="chain" id="PRO_0000273333" description="Phospholipase A1 member A">
    <location>
        <begin position="25"/>
        <end position="456"/>
    </location>
</feature>
<feature type="active site" description="Nucleophile" evidence="1">
    <location>
        <position position="166"/>
    </location>
</feature>
<feature type="active site" description="Charge relay system" evidence="3">
    <location>
        <position position="190"/>
    </location>
</feature>
<feature type="active site" description="Charge relay system" evidence="3">
    <location>
        <position position="260"/>
    </location>
</feature>
<feature type="glycosylation site" description="N-linked (GlcNAc...) asparagine" evidence="2">
    <location>
        <position position="365"/>
    </location>
</feature>
<feature type="disulfide bond" evidence="1">
    <location>
        <begin position="245"/>
        <end position="258"/>
    </location>
</feature>
<feature type="disulfide bond" evidence="1">
    <location>
        <begin position="282"/>
        <end position="293"/>
    </location>
</feature>
<feature type="disulfide bond" evidence="1">
    <location>
        <begin position="296"/>
        <end position="304"/>
    </location>
</feature>
<feature type="sequence conflict" description="In Ref. 1; AA sequence." evidence="6" ref="1">
    <original>T</original>
    <variation>P</variation>
    <location>
        <position position="30"/>
    </location>
</feature>
<feature type="sequence conflict" description="In Ref. 1; AA sequence." evidence="6" ref="1">
    <original>C</original>
    <variation>S</variation>
    <location>
        <position position="293"/>
    </location>
</feature>
<feature type="sequence conflict" description="In Ref. 1; AA sequence." evidence="6" ref="1">
    <original>C</original>
    <variation>S</variation>
    <location>
        <position position="296"/>
    </location>
</feature>
<keyword id="KW-0903">Direct protein sequencing</keyword>
<keyword id="KW-1015">Disulfide bond</keyword>
<keyword id="KW-0325">Glycoprotein</keyword>
<keyword id="KW-0378">Hydrolase</keyword>
<keyword id="KW-0442">Lipid degradation</keyword>
<keyword id="KW-0443">Lipid metabolism</keyword>
<keyword id="KW-1185">Reference proteome</keyword>
<keyword id="KW-0964">Secreted</keyword>
<keyword id="KW-0732">Signal</keyword>
<gene>
    <name evidence="8" type="primary">Pla1a</name>
    <name type="synonym">Pspla1</name>
</gene>
<reference key="1">
    <citation type="journal article" date="1997" name="J. Biol. Chem.">
        <title>Serine phospholipid-specific phospholipase A that is secreted from activated platelets.</title>
        <authorList>
            <person name="Sato T."/>
            <person name="Aoki J."/>
            <person name="Nagai Y."/>
            <person name="Dohmae N."/>
            <person name="Takio K."/>
            <person name="Doi T."/>
            <person name="Arai H."/>
            <person name="Inoue K."/>
        </authorList>
    </citation>
    <scope>NUCLEOTIDE SEQUENCE [MRNA]</scope>
    <scope>PROTEIN SEQUENCE OF 25-53; 139-149; 175-194; 279-302; 372-376 AND 401-410</scope>
    <scope>FUNCTION</scope>
    <scope>CATALYTIC ACTIVITY</scope>
    <scope>SUBCELLULAR LOCATION</scope>
    <source>
        <strain>Wistar</strain>
        <tissue>Platelet</tissue>
    </source>
</reference>
<reference key="2">
    <citation type="journal article" date="2004" name="Genome Res.">
        <title>The status, quality, and expansion of the NIH full-length cDNA project: the Mammalian Gene Collection (MGC).</title>
        <authorList>
            <consortium name="The MGC Project Team"/>
        </authorList>
    </citation>
    <scope>NUCLEOTIDE SEQUENCE [LARGE SCALE MRNA]</scope>
    <source>
        <tissue>Lung</tissue>
    </source>
</reference>
<reference key="3">
    <citation type="journal article" date="2001" name="J. Biol. Chem.">
        <title>Phosphatidylserine-specific phospholipase A1 stimulates histamine release from rat peritoneal mast cells through production of 2-acyl-1-lysophosphatidylserine.</title>
        <authorList>
            <person name="Hosono H."/>
            <person name="Aoki J."/>
            <person name="Nagai Y."/>
            <person name="Bandoh K."/>
            <person name="Ishida M."/>
            <person name="Taguchi R."/>
            <person name="Arai H."/>
            <person name="Inoue K."/>
        </authorList>
    </citation>
    <scope>FUNCTION</scope>
</reference>
<accession>P97535</accession>
<name>PLA1A_RAT</name>
<organism>
    <name type="scientific">Rattus norvegicus</name>
    <name type="common">Rat</name>
    <dbReference type="NCBI Taxonomy" id="10116"/>
    <lineage>
        <taxon>Eukaryota</taxon>
        <taxon>Metazoa</taxon>
        <taxon>Chordata</taxon>
        <taxon>Craniata</taxon>
        <taxon>Vertebrata</taxon>
        <taxon>Euteleostomi</taxon>
        <taxon>Mammalia</taxon>
        <taxon>Eutheria</taxon>
        <taxon>Euarchontoglires</taxon>
        <taxon>Glires</taxon>
        <taxon>Rodentia</taxon>
        <taxon>Myomorpha</taxon>
        <taxon>Muroidea</taxon>
        <taxon>Muridae</taxon>
        <taxon>Murinae</taxon>
        <taxon>Rattus</taxon>
    </lineage>
</organism>
<proteinExistence type="evidence at protein level"/>
<protein>
    <recommendedName>
        <fullName evidence="6">Phospholipase A1 member A</fullName>
        <ecNumber evidence="5">3.1.1.111</ecNumber>
    </recommendedName>
    <alternativeName>
        <fullName>Phosphatidylserine-specific phospholipase A1</fullName>
        <shortName>PS-PLA1</shortName>
    </alternativeName>
</protein>
<evidence type="ECO:0000250" key="1"/>
<evidence type="ECO:0000255" key="2"/>
<evidence type="ECO:0000255" key="3">
    <source>
        <dbReference type="PROSITE-ProRule" id="PRU10037"/>
    </source>
</evidence>
<evidence type="ECO:0000269" key="4">
    <source>
    </source>
</evidence>
<evidence type="ECO:0000269" key="5">
    <source>
    </source>
</evidence>
<evidence type="ECO:0000305" key="6"/>
<evidence type="ECO:0000305" key="7">
    <source>
    </source>
</evidence>
<evidence type="ECO:0000312" key="8">
    <source>
        <dbReference type="RGD" id="621261"/>
    </source>
</evidence>